<evidence type="ECO:0000250" key="1"/>
<evidence type="ECO:0000255" key="2">
    <source>
        <dbReference type="HAMAP-Rule" id="MF_00403"/>
    </source>
</evidence>
<evidence type="ECO:0000256" key="3">
    <source>
        <dbReference type="SAM" id="MobiDB-lite"/>
    </source>
</evidence>
<evidence type="ECO:0000305" key="4"/>
<accession>B4U0V7</accession>
<protein>
    <recommendedName>
        <fullName evidence="2">Small ribosomal subunit protein uS12</fullName>
    </recommendedName>
    <alternativeName>
        <fullName evidence="4">30S ribosomal protein S12</fullName>
    </alternativeName>
</protein>
<reference key="1">
    <citation type="journal article" date="2008" name="PLoS ONE">
        <title>Genome sequence of a lancefield group C Streptococcus zooepidemicus strain causing epidemic nephritis: new information about an old disease.</title>
        <authorList>
            <person name="Beres S.B."/>
            <person name="Sesso R."/>
            <person name="Pinto S.W.L."/>
            <person name="Hoe N.P."/>
            <person name="Porcella S.F."/>
            <person name="Deleo F.R."/>
            <person name="Musser J.M."/>
        </authorList>
    </citation>
    <scope>NUCLEOTIDE SEQUENCE [LARGE SCALE GENOMIC DNA]</scope>
    <source>
        <strain>MGCS10565</strain>
    </source>
</reference>
<gene>
    <name evidence="2" type="primary">rpsL</name>
    <name type="ordered locus">Sez_0266</name>
</gene>
<dbReference type="EMBL" id="CP001129">
    <property type="protein sequence ID" value="ACG61644.1"/>
    <property type="molecule type" value="Genomic_DNA"/>
</dbReference>
<dbReference type="RefSeq" id="WP_012514925.1">
    <property type="nucleotide sequence ID" value="NC_011134.1"/>
</dbReference>
<dbReference type="SMR" id="B4U0V7"/>
<dbReference type="KEGG" id="sez:Sez_0266"/>
<dbReference type="HOGENOM" id="CLU_104295_1_2_9"/>
<dbReference type="Proteomes" id="UP000001873">
    <property type="component" value="Chromosome"/>
</dbReference>
<dbReference type="GO" id="GO:0015935">
    <property type="term" value="C:small ribosomal subunit"/>
    <property type="evidence" value="ECO:0007669"/>
    <property type="project" value="InterPro"/>
</dbReference>
<dbReference type="GO" id="GO:0019843">
    <property type="term" value="F:rRNA binding"/>
    <property type="evidence" value="ECO:0007669"/>
    <property type="project" value="UniProtKB-UniRule"/>
</dbReference>
<dbReference type="GO" id="GO:0003735">
    <property type="term" value="F:structural constituent of ribosome"/>
    <property type="evidence" value="ECO:0007669"/>
    <property type="project" value="InterPro"/>
</dbReference>
<dbReference type="GO" id="GO:0000049">
    <property type="term" value="F:tRNA binding"/>
    <property type="evidence" value="ECO:0007669"/>
    <property type="project" value="UniProtKB-UniRule"/>
</dbReference>
<dbReference type="GO" id="GO:0006412">
    <property type="term" value="P:translation"/>
    <property type="evidence" value="ECO:0007669"/>
    <property type="project" value="UniProtKB-UniRule"/>
</dbReference>
<dbReference type="CDD" id="cd03368">
    <property type="entry name" value="Ribosomal_S12"/>
    <property type="match status" value="1"/>
</dbReference>
<dbReference type="FunFam" id="2.40.50.140:FF:000001">
    <property type="entry name" value="30S ribosomal protein S12"/>
    <property type="match status" value="1"/>
</dbReference>
<dbReference type="Gene3D" id="2.40.50.140">
    <property type="entry name" value="Nucleic acid-binding proteins"/>
    <property type="match status" value="1"/>
</dbReference>
<dbReference type="HAMAP" id="MF_00403_B">
    <property type="entry name" value="Ribosomal_uS12_B"/>
    <property type="match status" value="1"/>
</dbReference>
<dbReference type="InterPro" id="IPR012340">
    <property type="entry name" value="NA-bd_OB-fold"/>
</dbReference>
<dbReference type="InterPro" id="IPR006032">
    <property type="entry name" value="Ribosomal_uS12"/>
</dbReference>
<dbReference type="InterPro" id="IPR005679">
    <property type="entry name" value="Ribosomal_uS12_bac"/>
</dbReference>
<dbReference type="NCBIfam" id="TIGR00981">
    <property type="entry name" value="rpsL_bact"/>
    <property type="match status" value="1"/>
</dbReference>
<dbReference type="PANTHER" id="PTHR11652">
    <property type="entry name" value="30S RIBOSOMAL PROTEIN S12 FAMILY MEMBER"/>
    <property type="match status" value="1"/>
</dbReference>
<dbReference type="Pfam" id="PF00164">
    <property type="entry name" value="Ribosom_S12_S23"/>
    <property type="match status" value="1"/>
</dbReference>
<dbReference type="PRINTS" id="PR01034">
    <property type="entry name" value="RIBOSOMALS12"/>
</dbReference>
<dbReference type="SUPFAM" id="SSF50249">
    <property type="entry name" value="Nucleic acid-binding proteins"/>
    <property type="match status" value="1"/>
</dbReference>
<dbReference type="PROSITE" id="PS00055">
    <property type="entry name" value="RIBOSOMAL_S12"/>
    <property type="match status" value="1"/>
</dbReference>
<keyword id="KW-0488">Methylation</keyword>
<keyword id="KW-0687">Ribonucleoprotein</keyword>
<keyword id="KW-0689">Ribosomal protein</keyword>
<keyword id="KW-0694">RNA-binding</keyword>
<keyword id="KW-0699">rRNA-binding</keyword>
<keyword id="KW-0820">tRNA-binding</keyword>
<comment type="function">
    <text evidence="2">With S4 and S5 plays an important role in translational accuracy.</text>
</comment>
<comment type="function">
    <text evidence="2">Interacts with and stabilizes bases of the 16S rRNA that are involved in tRNA selection in the A site and with the mRNA backbone. Located at the interface of the 30S and 50S subunits, it traverses the body of the 30S subunit contacting proteins on the other side and probably holding the rRNA structure together. The combined cluster of proteins S8, S12 and S17 appears to hold together the shoulder and platform of the 30S subunit.</text>
</comment>
<comment type="subunit">
    <text evidence="2">Part of the 30S ribosomal subunit. Contacts proteins S8 and S17. May interact with IF1 in the 30S initiation complex.</text>
</comment>
<comment type="similarity">
    <text evidence="2">Belongs to the universal ribosomal protein uS12 family.</text>
</comment>
<sequence>MPTINQLVRKPRKSKIEKSDSPALNIGYNSHKKVHTKLAAPQKRGVATRVGTMTPKKPNSALRKFARVRLSNLIEVTAYIPGIGHNLQEHSVVLIRGGRVKDLPGVRYHIVRGALDTAGVADRKQGRSKYGAKRPKG</sequence>
<organism>
    <name type="scientific">Streptococcus equi subsp. zooepidemicus (strain MGCS10565)</name>
    <dbReference type="NCBI Taxonomy" id="552526"/>
    <lineage>
        <taxon>Bacteria</taxon>
        <taxon>Bacillati</taxon>
        <taxon>Bacillota</taxon>
        <taxon>Bacilli</taxon>
        <taxon>Lactobacillales</taxon>
        <taxon>Streptococcaceae</taxon>
        <taxon>Streptococcus</taxon>
    </lineage>
</organism>
<feature type="chain" id="PRO_1000123520" description="Small ribosomal subunit protein uS12">
    <location>
        <begin position="1"/>
        <end position="137"/>
    </location>
</feature>
<feature type="region of interest" description="Disordered" evidence="3">
    <location>
        <begin position="1"/>
        <end position="21"/>
    </location>
</feature>
<feature type="region of interest" description="Disordered" evidence="3">
    <location>
        <begin position="34"/>
        <end position="57"/>
    </location>
</feature>
<feature type="modified residue" description="3-methylthioaspartic acid" evidence="1">
    <location>
        <position position="102"/>
    </location>
</feature>
<name>RS12_STREM</name>
<proteinExistence type="inferred from homology"/>